<organism>
    <name type="scientific">Rhodobacter capsulatus (strain ATCC BAA-309 / NBRC 16581 / SB1003)</name>
    <dbReference type="NCBI Taxonomy" id="272942"/>
    <lineage>
        <taxon>Bacteria</taxon>
        <taxon>Pseudomonadati</taxon>
        <taxon>Pseudomonadota</taxon>
        <taxon>Alphaproteobacteria</taxon>
        <taxon>Rhodobacterales</taxon>
        <taxon>Rhodobacter group</taxon>
        <taxon>Rhodobacter</taxon>
    </lineage>
</organism>
<evidence type="ECO:0000255" key="1">
    <source>
        <dbReference type="HAMAP-Rule" id="MF_01107"/>
    </source>
</evidence>
<feature type="chain" id="PRO_0000112775" description="Acetylornithine aminotransferase">
    <location>
        <begin position="1"/>
        <end position="393"/>
    </location>
</feature>
<feature type="binding site" evidence="1">
    <location>
        <begin position="96"/>
        <end position="97"/>
    </location>
    <ligand>
        <name>pyridoxal 5'-phosphate</name>
        <dbReference type="ChEBI" id="CHEBI:597326"/>
    </ligand>
</feature>
<feature type="binding site" evidence="1">
    <location>
        <position position="129"/>
    </location>
    <ligand>
        <name>pyridoxal 5'-phosphate</name>
        <dbReference type="ChEBI" id="CHEBI:597326"/>
    </ligand>
</feature>
<feature type="binding site" evidence="1">
    <location>
        <position position="132"/>
    </location>
    <ligand>
        <name>N(2)-acetyl-L-ornithine</name>
        <dbReference type="ChEBI" id="CHEBI:57805"/>
    </ligand>
</feature>
<feature type="binding site" evidence="1">
    <location>
        <begin position="214"/>
        <end position="217"/>
    </location>
    <ligand>
        <name>pyridoxal 5'-phosphate</name>
        <dbReference type="ChEBI" id="CHEBI:597326"/>
    </ligand>
</feature>
<feature type="binding site" evidence="1">
    <location>
        <position position="271"/>
    </location>
    <ligand>
        <name>N(2)-acetyl-L-ornithine</name>
        <dbReference type="ChEBI" id="CHEBI:57805"/>
    </ligand>
</feature>
<feature type="binding site" evidence="1">
    <location>
        <position position="272"/>
    </location>
    <ligand>
        <name>pyridoxal 5'-phosphate</name>
        <dbReference type="ChEBI" id="CHEBI:597326"/>
    </ligand>
</feature>
<feature type="modified residue" description="N6-(pyridoxal phosphate)lysine" evidence="1">
    <location>
        <position position="243"/>
    </location>
</feature>
<gene>
    <name evidence="1" type="primary">argD</name>
    <name type="ordered locus">RCAP_rcc03135</name>
</gene>
<protein>
    <recommendedName>
        <fullName evidence="1">Acetylornithine aminotransferase</fullName>
        <shortName evidence="1">ACOAT</shortName>
        <ecNumber evidence="1">2.6.1.11</ecNumber>
    </recommendedName>
</protein>
<reference key="1">
    <citation type="journal article" date="2010" name="J. Bacteriol.">
        <title>Complete genome sequence of the photosynthetic purple nonsulfur bacterium Rhodobacter capsulatus SB 1003.</title>
        <authorList>
            <person name="Strnad H."/>
            <person name="Lapidus A."/>
            <person name="Paces J."/>
            <person name="Ulbrich P."/>
            <person name="Vlcek C."/>
            <person name="Paces V."/>
            <person name="Haselkorn R."/>
        </authorList>
    </citation>
    <scope>NUCLEOTIDE SEQUENCE [LARGE SCALE GENOMIC DNA]</scope>
    <source>
        <strain>ATCC BAA-309 / NBRC 16581 / SB1003</strain>
    </source>
</reference>
<reference key="2">
    <citation type="journal article" date="1992" name="Genes Dev.">
        <title>Bacterial cytochromes c biogenesis.</title>
        <authorList>
            <person name="Beckman D.L."/>
            <person name="Trawick D.R."/>
            <person name="Kranz R.G."/>
        </authorList>
    </citation>
    <scope>NUCLEOTIDE SEQUENCE [GENOMIC DNA] OF 1-71</scope>
    <source>
        <strain>ATCC BAA-309 / NBRC 16581 / SB1003</strain>
    </source>
</reference>
<comment type="catalytic activity">
    <reaction evidence="1">
        <text>N(2)-acetyl-L-ornithine + 2-oxoglutarate = N-acetyl-L-glutamate 5-semialdehyde + L-glutamate</text>
        <dbReference type="Rhea" id="RHEA:18049"/>
        <dbReference type="ChEBI" id="CHEBI:16810"/>
        <dbReference type="ChEBI" id="CHEBI:29123"/>
        <dbReference type="ChEBI" id="CHEBI:29985"/>
        <dbReference type="ChEBI" id="CHEBI:57805"/>
        <dbReference type="EC" id="2.6.1.11"/>
    </reaction>
</comment>
<comment type="cofactor">
    <cofactor evidence="1">
        <name>pyridoxal 5'-phosphate</name>
        <dbReference type="ChEBI" id="CHEBI:597326"/>
    </cofactor>
    <text evidence="1">Binds 1 pyridoxal phosphate per subunit.</text>
</comment>
<comment type="pathway">
    <text evidence="1">Amino-acid biosynthesis; L-arginine biosynthesis; N(2)-acetyl-L-ornithine from L-glutamate: step 4/4.</text>
</comment>
<comment type="subunit">
    <text evidence="1">Homodimer.</text>
</comment>
<comment type="subcellular location">
    <subcellularLocation>
        <location evidence="1">Cytoplasm</location>
    </subcellularLocation>
</comment>
<comment type="miscellaneous">
    <text evidence="1">May also have succinyldiaminopimelate aminotransferase activity, thus carrying out the corresponding step in lysine biosynthesis.</text>
</comment>
<comment type="similarity">
    <text evidence="1">Belongs to the class-III pyridoxal-phosphate-dependent aminotransferase family. ArgD subfamily.</text>
</comment>
<proteinExistence type="inferred from homology"/>
<accession>P30900</accession>
<accession>D5AR54</accession>
<sequence>MIASVLPTYTRAPLAFVRGEGSWLWTADGSRYLDLGAGIAVNALGHAAPDLVATLTEQAGKLWHVSNLYRIPEQERLADMLVAKTFADTVFFTNSGTEACELAVKMVRKHFYDKGQPERTEILTFSGAFHGRSSAAIAAAGTEKMVKGFGPLLPGFVHLPWGDLDAVKAAVTETTAAILIEPIQGEGGIRPAPEGFLRALREICDETGTLLVFDEVQCGVARTGKLFAHEWAGVTPDVMMVAKGIGGGFPLGAVLATEDAASGMIAGTHGSTYGGNPLGCAIGAKMIEIVTAPGFLDEVSRKAGFLRQWLEGLVAAHPDIFEEVRGQGLMLGLRLKLPPGDVVKAAYAQNLLTVPAADNVLRLLPALTISEDDMAEAVRRLDAAAASLETQPA</sequence>
<dbReference type="EC" id="2.6.1.11" evidence="1"/>
<dbReference type="EMBL" id="CP001312">
    <property type="protein sequence ID" value="ADE86859.1"/>
    <property type="molecule type" value="Genomic_DNA"/>
</dbReference>
<dbReference type="EMBL" id="X63461">
    <property type="status" value="NOT_ANNOTATED_CDS"/>
    <property type="molecule type" value="Genomic_DNA"/>
</dbReference>
<dbReference type="PIR" id="S29255">
    <property type="entry name" value="S29255"/>
</dbReference>
<dbReference type="RefSeq" id="WP_013068832.1">
    <property type="nucleotide sequence ID" value="NC_014034.1"/>
</dbReference>
<dbReference type="SMR" id="P30900"/>
<dbReference type="STRING" id="272942.RCAP_rcc03135"/>
<dbReference type="GeneID" id="31491922"/>
<dbReference type="KEGG" id="rcp:RCAP_rcc03135"/>
<dbReference type="eggNOG" id="COG4992">
    <property type="taxonomic scope" value="Bacteria"/>
</dbReference>
<dbReference type="HOGENOM" id="CLU_016922_10_1_5"/>
<dbReference type="OrthoDB" id="9801834at2"/>
<dbReference type="UniPathway" id="UPA00068">
    <property type="reaction ID" value="UER00109"/>
</dbReference>
<dbReference type="Proteomes" id="UP000002361">
    <property type="component" value="Chromosome"/>
</dbReference>
<dbReference type="GO" id="GO:0005737">
    <property type="term" value="C:cytoplasm"/>
    <property type="evidence" value="ECO:0007669"/>
    <property type="project" value="UniProtKB-SubCell"/>
</dbReference>
<dbReference type="GO" id="GO:0042802">
    <property type="term" value="F:identical protein binding"/>
    <property type="evidence" value="ECO:0007669"/>
    <property type="project" value="TreeGrafter"/>
</dbReference>
<dbReference type="GO" id="GO:0003992">
    <property type="term" value="F:N2-acetyl-L-ornithine:2-oxoglutarate 5-aminotransferase activity"/>
    <property type="evidence" value="ECO:0007669"/>
    <property type="project" value="UniProtKB-UniRule"/>
</dbReference>
<dbReference type="GO" id="GO:0030170">
    <property type="term" value="F:pyridoxal phosphate binding"/>
    <property type="evidence" value="ECO:0007669"/>
    <property type="project" value="InterPro"/>
</dbReference>
<dbReference type="GO" id="GO:0006526">
    <property type="term" value="P:L-arginine biosynthetic process"/>
    <property type="evidence" value="ECO:0007669"/>
    <property type="project" value="UniProtKB-UniRule"/>
</dbReference>
<dbReference type="CDD" id="cd00610">
    <property type="entry name" value="OAT_like"/>
    <property type="match status" value="1"/>
</dbReference>
<dbReference type="FunFam" id="3.40.640.10:FF:000004">
    <property type="entry name" value="Acetylornithine aminotransferase"/>
    <property type="match status" value="1"/>
</dbReference>
<dbReference type="Gene3D" id="3.90.1150.10">
    <property type="entry name" value="Aspartate Aminotransferase, domain 1"/>
    <property type="match status" value="1"/>
</dbReference>
<dbReference type="Gene3D" id="3.40.640.10">
    <property type="entry name" value="Type I PLP-dependent aspartate aminotransferase-like (Major domain)"/>
    <property type="match status" value="1"/>
</dbReference>
<dbReference type="HAMAP" id="MF_01107">
    <property type="entry name" value="ArgD_aminotrans_3"/>
    <property type="match status" value="1"/>
</dbReference>
<dbReference type="InterPro" id="IPR004636">
    <property type="entry name" value="AcOrn/SuccOrn_fam"/>
</dbReference>
<dbReference type="InterPro" id="IPR005814">
    <property type="entry name" value="Aminotrans_3"/>
</dbReference>
<dbReference type="InterPro" id="IPR049704">
    <property type="entry name" value="Aminotrans_3_PPA_site"/>
</dbReference>
<dbReference type="InterPro" id="IPR050103">
    <property type="entry name" value="Class-III_PLP-dep_AT"/>
</dbReference>
<dbReference type="InterPro" id="IPR015424">
    <property type="entry name" value="PyrdxlP-dep_Trfase"/>
</dbReference>
<dbReference type="InterPro" id="IPR015421">
    <property type="entry name" value="PyrdxlP-dep_Trfase_major"/>
</dbReference>
<dbReference type="InterPro" id="IPR015422">
    <property type="entry name" value="PyrdxlP-dep_Trfase_small"/>
</dbReference>
<dbReference type="NCBIfam" id="TIGR00707">
    <property type="entry name" value="argD"/>
    <property type="match status" value="1"/>
</dbReference>
<dbReference type="NCBIfam" id="NF002325">
    <property type="entry name" value="PRK01278.1"/>
    <property type="match status" value="1"/>
</dbReference>
<dbReference type="PANTHER" id="PTHR11986">
    <property type="entry name" value="AMINOTRANSFERASE CLASS III"/>
    <property type="match status" value="1"/>
</dbReference>
<dbReference type="PANTHER" id="PTHR11986:SF113">
    <property type="entry name" value="SUCCINYLORNITHINE TRANSAMINASE"/>
    <property type="match status" value="1"/>
</dbReference>
<dbReference type="Pfam" id="PF00202">
    <property type="entry name" value="Aminotran_3"/>
    <property type="match status" value="1"/>
</dbReference>
<dbReference type="PIRSF" id="PIRSF000521">
    <property type="entry name" value="Transaminase_4ab_Lys_Orn"/>
    <property type="match status" value="1"/>
</dbReference>
<dbReference type="SUPFAM" id="SSF53383">
    <property type="entry name" value="PLP-dependent transferases"/>
    <property type="match status" value="1"/>
</dbReference>
<dbReference type="PROSITE" id="PS00600">
    <property type="entry name" value="AA_TRANSFER_CLASS_3"/>
    <property type="match status" value="1"/>
</dbReference>
<keyword id="KW-0028">Amino-acid biosynthesis</keyword>
<keyword id="KW-0032">Aminotransferase</keyword>
<keyword id="KW-0055">Arginine biosynthesis</keyword>
<keyword id="KW-0963">Cytoplasm</keyword>
<keyword id="KW-0663">Pyridoxal phosphate</keyword>
<keyword id="KW-1185">Reference proteome</keyword>
<keyword id="KW-0808">Transferase</keyword>
<name>ARGD_RHOCB</name>